<gene>
    <name evidence="8" type="primary">vps-33.2</name>
    <name evidence="8" type="ORF">C56C10.1</name>
</gene>
<comment type="function">
    <text evidence="2 3 4">Plays a role in vesicle-mediated protein trafficking to lysosomal compartments and in membrane docking/fusion reactions of late endosomes/lysosomes (PubMed:25273556). Believed to act as a component of the putative CORVET endosomal tethering complex which is proposed to be involved in the rab-5-to-rab-7 endosome conversion probably implicating sand-1, and via binding SNAREs and SNARE complexes to mediate tethering and docking events during SNARE-mediated membrane fusion (PubMed:25273556). The CORVET complex is proposed to function as a rab-5 effector to mediate early endosome fusion probably in specific endosome subpopulations (PubMed:25273556). Most likely within the CORVET complex, it is involved in the fusion of endocytic compartments (PubMed:25273556). Required for sperm development and function (PubMed:19109425, PubMed:27558849).</text>
</comment>
<comment type="subunit">
    <text evidence="2 6">Probable core component of the class C core vacuole/endosome tethering (CORVET) complex. The common core is composed of the class C Vps proteins vps-11, vps-16 and vps-18, and which further associates with vps-8 and vps-33.2 (PubMed:25273556). Interacts with spe-39 (PubMed:19109425).</text>
</comment>
<comment type="subcellular location">
    <subcellularLocation>
        <location evidence="3 4">Early endosome</location>
    </subcellularLocation>
    <subcellularLocation>
        <location evidence="4">Late endosome membrane</location>
        <topology evidence="1">Peripheral membrane protein</topology>
        <orientation evidence="1">Cytoplasmic side</orientation>
    </subcellularLocation>
    <subcellularLocation>
        <location evidence="1">Lysosome membrane</location>
        <topology evidence="1">Peripheral membrane protein</topology>
        <orientation evidence="1">Cytoplasmic side</orientation>
    </subcellularLocation>
    <subcellularLocation>
        <location evidence="1">Cytoplasmic vesicle</location>
        <location evidence="1">Clathrin-coated vesicle</location>
    </subcellularLocation>
    <subcellularLocation>
        <location evidence="1">Recycling endosome</location>
    </subcellularLocation>
</comment>
<comment type="tissue specificity">
    <text evidence="3 4">Broadly expressed in somatic tissues including the pharynx, intestine, spermatheca, and in coelomocytes (PubMed:27558849). Expressed in the lining of the gut lumen (PubMed:25273556).</text>
</comment>
<comment type="disruption phenotype">
    <text evidence="3 4">Hermaphrodites exhibit sperm-specific sterility and only lay unfertilized eggs (PubMed:27558849). In contrast to wild-type animals, mutant males produce no or few spermatids in their gonads, but instead their gonads accumulate terminally arrested spermatocytes that do not bud and contain four haploid nuclei (PubMed:27558849). In some instances, the spermatocytes have small buds that do not form spermatids (PubMed:27558849). Oocytes and unfertilized eggs contain some larger endocytic structures tethered to yolk granules (PubMed:27558849). RNAi-mediated knockdown results in defective yolk uptake in oocytes with the appearance of endocytic structures containing yolk tethered to large membranous organelles which could be lysosomes (PubMed:25273556). RNAi-mediated knockdown results in defective endosome maturation with the accumulation of small vesicles near the gut lumen which is possibly indicative of increased endosomal fusion activity, and defective trafficking of proteins such as lmp-1 to lysosomal compartments (PubMed:25273556). RNAi-mediated knockdown in a sand-1 mutant background results in defective endosome fusion with the formation of larger, irregularly-shaped rab-5 positive endosomes in oocytes and intestinal cells, and larger yolk-containing granules than in the sand-1 single mutant (PubMed:25273556). Double RNAi-mediated knockdown together with vsp-33.1 results in defective protein trafficking to lysosomal compartments, and an irregular distribution of vesicles of various sizes throughout the gut cells (PubMed:25273556). Double RNAi-mediated knockdown together with vsp-33.1 in a sand-1 mutant background rescues the large endosome phenotype and the defective protein trafficking to lysosomal compartments in the sand-1 single mutant, but results in lethality (PubMed:25273556).</text>
</comment>
<comment type="similarity">
    <text evidence="5">Belongs to the STXBP/unc-18/SEC1 family.</text>
</comment>
<proteinExistence type="evidence at protein level"/>
<evidence type="ECO:0000250" key="1">
    <source>
        <dbReference type="UniProtKB" id="Q9H267"/>
    </source>
</evidence>
<evidence type="ECO:0000269" key="2">
    <source>
    </source>
</evidence>
<evidence type="ECO:0000269" key="3">
    <source>
    </source>
</evidence>
<evidence type="ECO:0000269" key="4">
    <source>
    </source>
</evidence>
<evidence type="ECO:0000305" key="5"/>
<evidence type="ECO:0000305" key="6">
    <source>
    </source>
</evidence>
<evidence type="ECO:0000312" key="7">
    <source>
        <dbReference type="Proteomes" id="UP000001940"/>
    </source>
</evidence>
<evidence type="ECO:0000312" key="8">
    <source>
        <dbReference type="WormBase" id="C56C10.1"/>
    </source>
</evidence>
<protein>
    <recommendedName>
        <fullName evidence="5">Vacuolar protein sorting-associated protein 33B</fullName>
    </recommendedName>
</protein>
<keyword id="KW-0968">Cytoplasmic vesicle</keyword>
<keyword id="KW-0221">Differentiation</keyword>
<keyword id="KW-0967">Endosome</keyword>
<keyword id="KW-0458">Lysosome</keyword>
<keyword id="KW-0472">Membrane</keyword>
<keyword id="KW-1185">Reference proteome</keyword>
<keyword id="KW-0744">Spermatogenesis</keyword>
<dbReference type="EMBL" id="BX284602">
    <property type="protein sequence ID" value="CCD68172.1"/>
    <property type="molecule type" value="Genomic_DNA"/>
</dbReference>
<dbReference type="PIR" id="T15853">
    <property type="entry name" value="T15853"/>
</dbReference>
<dbReference type="RefSeq" id="NP_495342.2">
    <property type="nucleotide sequence ID" value="NM_062941.5"/>
</dbReference>
<dbReference type="SMR" id="Q18891"/>
<dbReference type="ComplexPortal" id="CPX-1137">
    <property type="entry name" value="CORVET tethering complex"/>
</dbReference>
<dbReference type="DIP" id="DIP-25718N"/>
<dbReference type="FunCoup" id="Q18891">
    <property type="interactions" value="3158"/>
</dbReference>
<dbReference type="IntAct" id="Q18891">
    <property type="interactions" value="2"/>
</dbReference>
<dbReference type="STRING" id="6239.C56C10.1.1"/>
<dbReference type="PaxDb" id="6239-C56C10.1"/>
<dbReference type="PeptideAtlas" id="Q18891"/>
<dbReference type="EnsemblMetazoa" id="C56C10.1.1">
    <property type="protein sequence ID" value="C56C10.1.1"/>
    <property type="gene ID" value="WBGene00016960"/>
</dbReference>
<dbReference type="GeneID" id="174095"/>
<dbReference type="KEGG" id="cel:CELE_C56C10.1"/>
<dbReference type="UCSC" id="C56C10.1">
    <property type="organism name" value="c. elegans"/>
</dbReference>
<dbReference type="AGR" id="WB:WBGene00016960"/>
<dbReference type="CTD" id="174095"/>
<dbReference type="WormBase" id="C56C10.1">
    <property type="protein sequence ID" value="CE30636"/>
    <property type="gene ID" value="WBGene00016960"/>
    <property type="gene designation" value="vps-33.2"/>
</dbReference>
<dbReference type="eggNOG" id="KOG1302">
    <property type="taxonomic scope" value="Eukaryota"/>
</dbReference>
<dbReference type="GeneTree" id="ENSGT00940000156813"/>
<dbReference type="HOGENOM" id="CLU_016678_3_0_1"/>
<dbReference type="InParanoid" id="Q18891"/>
<dbReference type="OMA" id="QVHIYMI"/>
<dbReference type="OrthoDB" id="10262528at2759"/>
<dbReference type="PhylomeDB" id="Q18891"/>
<dbReference type="PRO" id="PR:Q18891"/>
<dbReference type="Proteomes" id="UP000001940">
    <property type="component" value="Chromosome II"/>
</dbReference>
<dbReference type="Bgee" id="WBGene00016960">
    <property type="expression patterns" value="Expressed in germ line (C elegans) and 4 other cell types or tissues"/>
</dbReference>
<dbReference type="GO" id="GO:0030136">
    <property type="term" value="C:clathrin-coated vesicle"/>
    <property type="evidence" value="ECO:0007669"/>
    <property type="project" value="UniProtKB-SubCell"/>
</dbReference>
<dbReference type="GO" id="GO:0033263">
    <property type="term" value="C:CORVET complex"/>
    <property type="evidence" value="ECO:0000318"/>
    <property type="project" value="GO_Central"/>
</dbReference>
<dbReference type="GO" id="GO:0031901">
    <property type="term" value="C:early endosome membrane"/>
    <property type="evidence" value="ECO:0000303"/>
    <property type="project" value="ComplexPortal"/>
</dbReference>
<dbReference type="GO" id="GO:0031902">
    <property type="term" value="C:late endosome membrane"/>
    <property type="evidence" value="ECO:0007669"/>
    <property type="project" value="UniProtKB-SubCell"/>
</dbReference>
<dbReference type="GO" id="GO:0005765">
    <property type="term" value="C:lysosomal membrane"/>
    <property type="evidence" value="ECO:0007669"/>
    <property type="project" value="UniProtKB-SubCell"/>
</dbReference>
<dbReference type="GO" id="GO:0005764">
    <property type="term" value="C:lysosome"/>
    <property type="evidence" value="ECO:0000318"/>
    <property type="project" value="GO_Central"/>
</dbReference>
<dbReference type="GO" id="GO:0055037">
    <property type="term" value="C:recycling endosome"/>
    <property type="evidence" value="ECO:0007669"/>
    <property type="project" value="UniProtKB-SubCell"/>
</dbReference>
<dbReference type="GO" id="GO:0030154">
    <property type="term" value="P:cell differentiation"/>
    <property type="evidence" value="ECO:0007669"/>
    <property type="project" value="UniProtKB-KW"/>
</dbReference>
<dbReference type="GO" id="GO:0006886">
    <property type="term" value="P:intracellular protein transport"/>
    <property type="evidence" value="ECO:0000318"/>
    <property type="project" value="GO_Central"/>
</dbReference>
<dbReference type="GO" id="GO:0032889">
    <property type="term" value="P:regulation of vacuole fusion, non-autophagic"/>
    <property type="evidence" value="ECO:0000303"/>
    <property type="project" value="ComplexPortal"/>
</dbReference>
<dbReference type="GO" id="GO:0048137">
    <property type="term" value="P:spermatocyte division"/>
    <property type="evidence" value="ECO:0000315"/>
    <property type="project" value="UniProtKB"/>
</dbReference>
<dbReference type="GO" id="GO:0099022">
    <property type="term" value="P:vesicle tethering"/>
    <property type="evidence" value="ECO:0000303"/>
    <property type="project" value="ComplexPortal"/>
</dbReference>
<dbReference type="GO" id="GO:0016192">
    <property type="term" value="P:vesicle-mediated transport"/>
    <property type="evidence" value="ECO:0000318"/>
    <property type="project" value="GO_Central"/>
</dbReference>
<dbReference type="Gene3D" id="1.25.40.850">
    <property type="match status" value="1"/>
</dbReference>
<dbReference type="Gene3D" id="3.40.50.1910">
    <property type="match status" value="2"/>
</dbReference>
<dbReference type="Gene3D" id="3.40.50.2060">
    <property type="match status" value="1"/>
</dbReference>
<dbReference type="Gene3D" id="3.90.830.10">
    <property type="entry name" value="Syntaxin Binding Protein 1, Chain A, domain 2"/>
    <property type="match status" value="1"/>
</dbReference>
<dbReference type="InterPro" id="IPR043154">
    <property type="entry name" value="Sec-1-like_dom1"/>
</dbReference>
<dbReference type="InterPro" id="IPR043127">
    <property type="entry name" value="Sec-1-like_dom3a"/>
</dbReference>
<dbReference type="InterPro" id="IPR001619">
    <property type="entry name" value="Sec1-like"/>
</dbReference>
<dbReference type="InterPro" id="IPR027482">
    <property type="entry name" value="Sec1-like_dom2"/>
</dbReference>
<dbReference type="InterPro" id="IPR036045">
    <property type="entry name" value="Sec1-like_sf"/>
</dbReference>
<dbReference type="InterPro" id="IPR043155">
    <property type="entry name" value="VPS33_dom3b"/>
</dbReference>
<dbReference type="PANTHER" id="PTHR11679">
    <property type="entry name" value="VESICLE PROTEIN SORTING-ASSOCIATED"/>
    <property type="match status" value="1"/>
</dbReference>
<dbReference type="Pfam" id="PF00995">
    <property type="entry name" value="Sec1"/>
    <property type="match status" value="1"/>
</dbReference>
<dbReference type="SUPFAM" id="SSF56815">
    <property type="entry name" value="Sec1/munc18-like (SM) proteins"/>
    <property type="match status" value="1"/>
</dbReference>
<organism evidence="7">
    <name type="scientific">Caenorhabditis elegans</name>
    <dbReference type="NCBI Taxonomy" id="6239"/>
    <lineage>
        <taxon>Eukaryota</taxon>
        <taxon>Metazoa</taxon>
        <taxon>Ecdysozoa</taxon>
        <taxon>Nematoda</taxon>
        <taxon>Chromadorea</taxon>
        <taxon>Rhabditida</taxon>
        <taxon>Rhabditina</taxon>
        <taxon>Rhabditomorpha</taxon>
        <taxon>Rhabditoidea</taxon>
        <taxon>Rhabditidae</taxon>
        <taxon>Peloderinae</taxon>
        <taxon>Caenorhabditis</taxon>
    </lineage>
</organism>
<accession>Q18891</accession>
<feature type="chain" id="PRO_0000441275" description="Vacuolar protein sorting-associated protein 33B" evidence="5">
    <location>
        <begin position="1"/>
        <end position="617"/>
    </location>
</feature>
<reference evidence="7" key="1">
    <citation type="journal article" date="1998" name="Science">
        <title>Genome sequence of the nematode C. elegans: a platform for investigating biology.</title>
        <authorList>
            <consortium name="The C. elegans sequencing consortium"/>
        </authorList>
    </citation>
    <scope>NUCLEOTIDE SEQUENCE [LARGE SCALE GENOMIC DNA]</scope>
    <source>
        <strain evidence="7">Bristol N2</strain>
    </source>
</reference>
<reference evidence="5" key="2">
    <citation type="journal article" date="2009" name="Mol. Biol. Cell">
        <title>SPE-39 family proteins interact with the HOPS complex and function in lysosomal delivery.</title>
        <authorList>
            <person name="Zhu G.D."/>
            <person name="Salazar G."/>
            <person name="Zlatic S.A."/>
            <person name="Fiza B."/>
            <person name="Doucette M.M."/>
            <person name="Heilman C.J."/>
            <person name="Levey A.I."/>
            <person name="Faundez V."/>
            <person name="L'hernault S.W."/>
        </authorList>
    </citation>
    <scope>FUNCTION</scope>
    <scope>INTERACTION WITH SPE-39</scope>
</reference>
<reference evidence="5" key="3">
    <citation type="journal article" date="2014" name="Mol. Biol. Cell">
        <title>Loss of the Sec1/Munc18-family proteins VPS-33.2 and VPS-33.1 bypasses a block in endosome maturation in Caenorhabditis elegans.</title>
        <authorList>
            <person name="Solinger J.A."/>
            <person name="Spang A."/>
        </authorList>
    </citation>
    <scope>FUNCTION</scope>
    <scope>SUBCELLULAR LOCATION</scope>
    <scope>TISSUE SPECIFICITY</scope>
    <scope>DISRUPTION PHENOTYPE</scope>
</reference>
<reference evidence="5" key="4">
    <citation type="journal article" date="2016" name="Traffic">
        <title>Distinct roles of the two VPS33 proteins in the endolysosomal system in Caenorhabditis elegans.</title>
        <authorList>
            <person name="Gengyo-Ando K."/>
            <person name="Kage-Nakadai E."/>
            <person name="Yoshina S."/>
            <person name="Otori M."/>
            <person name="Kagawa-Nagamura Y."/>
            <person name="Nakai J."/>
            <person name="Mitani S."/>
        </authorList>
    </citation>
    <scope>FUNCTION</scope>
    <scope>SUBCELLULAR LOCATION</scope>
    <scope>TISSUE SPECIFICITY</scope>
    <scope>DISRUPTION PHENOTYPE</scope>
</reference>
<sequence>MAPGTAELEIDETLHLLRMVMQREFIHYLETLPGTKELFIDKCLLRPLDMIATSSDMKRHGVKRIMHFDLQKSPQVWNIEIDQRVFFLRPNVENARKIVEYVEESSENRSICVIWCNRQLEECDLAFESSGVIGHITQLSLNMCLLPLESDLFSLQHVESAQPDLFSVANMFVALQNLYGVIPTVYGLGSESKNLWNLVHALCSSNELRARPDQPISHLFLFDRQLDPVPVLLTGASYEGLLHEFFTIDCGKLAFPVDLRKQVQTGPLDFDWIEINPEEDKEAHQQNRGDTVKLDNCEDIFASIRNKHVTAALEFLHSKAKSIQKSIEKSSMIDDVADYRNFVEKDLRALKKDHKHCELHINACEMMMNKVKMEDYRTMFKLEHEMLLGTVTHEEYFDFVFERVPMRSCRDVVLSMMSLASLKLDGVPDDTYNEFVEMYLQKYGYEHMFELQNLRNSRVIYARRHIAHDRTISERARTWETLARKFRIVKGNEPMDMSNPSDMSYVFGARISPLLCKIVEDTIDHGWNQAEYERIIGKDKVLVEENTYIAADRRPDNRTRKAIMVFVNGGITYWEVAALRLLAIQKNFRILICTTHVIKKREYLEVRAKDASSVFGS</sequence>
<name>VP33B_CAEEL</name>